<feature type="initiator methionine" description="Removed" evidence="1">
    <location>
        <position position="1"/>
    </location>
</feature>
<feature type="chain" id="PRO_0000067409" description="Cellular retinoic acid-binding protein 1">
    <location>
        <begin position="2"/>
        <end position="137"/>
    </location>
</feature>
<feature type="short sequence motif" description="Nuclear localization signal" evidence="1">
    <location>
        <begin position="21"/>
        <end position="31"/>
    </location>
</feature>
<feature type="binding site" evidence="1">
    <location>
        <begin position="132"/>
        <end position="134"/>
    </location>
    <ligand>
        <name>all-trans-retinoate</name>
        <dbReference type="ChEBI" id="CHEBI:35291"/>
    </ligand>
</feature>
<feature type="sequence conflict" description="In Ref. 2; CAA72930." evidence="2" ref="2">
    <original>G</original>
    <variation>R</variation>
    <location>
        <position position="6"/>
    </location>
</feature>
<feature type="sequence conflict" description="In Ref. 3; CAA37738." evidence="2" ref="3">
    <original>MRS</original>
    <variation>NSG</variation>
    <location>
        <begin position="10"/>
        <end position="12"/>
    </location>
</feature>
<feature type="sequence conflict" description="In Ref. 3; CAA37738." evidence="2" ref="3">
    <original>E</original>
    <variation>I</variation>
    <location>
        <position position="113"/>
    </location>
</feature>
<dbReference type="EMBL" id="AB124570">
    <property type="protein sequence ID" value="BAD74120.1"/>
    <property type="molecule type" value="mRNA"/>
</dbReference>
<dbReference type="EMBL" id="Y12243">
    <property type="protein sequence ID" value="CAA72930.1"/>
    <property type="molecule type" value="Genomic_DNA"/>
</dbReference>
<dbReference type="EMBL" id="Y12244">
    <property type="protein sequence ID" value="CAA72930.1"/>
    <property type="status" value="JOINED"/>
    <property type="molecule type" value="Genomic_DNA"/>
</dbReference>
<dbReference type="EMBL" id="X53701">
    <property type="protein sequence ID" value="CAA37738.2"/>
    <property type="molecule type" value="mRNA"/>
</dbReference>
<dbReference type="PIR" id="A61629">
    <property type="entry name" value="A61629"/>
</dbReference>
<dbReference type="PIR" id="S13796">
    <property type="entry name" value="S13796"/>
</dbReference>
<dbReference type="RefSeq" id="NP_001025710.1">
    <property type="nucleotide sequence ID" value="NM_001030539.2"/>
</dbReference>
<dbReference type="SMR" id="P40220"/>
<dbReference type="FunCoup" id="P40220">
    <property type="interactions" value="7"/>
</dbReference>
<dbReference type="STRING" id="9031.ENSGALP00000033996"/>
<dbReference type="BindingDB" id="P40220"/>
<dbReference type="ChEMBL" id="CHEMBL4945"/>
<dbReference type="DrugCentral" id="P40220"/>
<dbReference type="PaxDb" id="9031-ENSGALP00000033996"/>
<dbReference type="GeneID" id="374211"/>
<dbReference type="KEGG" id="gga:374211"/>
<dbReference type="CTD" id="1381"/>
<dbReference type="VEuPathDB" id="HostDB:geneid_374211"/>
<dbReference type="eggNOG" id="KOG4015">
    <property type="taxonomic scope" value="Eukaryota"/>
</dbReference>
<dbReference type="HOGENOM" id="CLU_113772_0_2_1"/>
<dbReference type="InParanoid" id="P40220"/>
<dbReference type="OMA" id="MPNFAGN"/>
<dbReference type="OrthoDB" id="195110at2759"/>
<dbReference type="PhylomeDB" id="P40220"/>
<dbReference type="Reactome" id="R-GGA-5365859">
    <property type="pathway name" value="RA biosynthesis pathway"/>
</dbReference>
<dbReference type="PRO" id="PR:P40220"/>
<dbReference type="Proteomes" id="UP000000539">
    <property type="component" value="Chromosome 10"/>
</dbReference>
<dbReference type="Bgee" id="ENSGALG00000003193">
    <property type="expression patterns" value="Expressed in spermatid and 8 other cell types or tissues"/>
</dbReference>
<dbReference type="GO" id="GO:0030424">
    <property type="term" value="C:axon"/>
    <property type="evidence" value="ECO:0000314"/>
    <property type="project" value="AgBase"/>
</dbReference>
<dbReference type="GO" id="GO:0070852">
    <property type="term" value="C:cell body fiber"/>
    <property type="evidence" value="ECO:0000314"/>
    <property type="project" value="AgBase"/>
</dbReference>
<dbReference type="GO" id="GO:0005829">
    <property type="term" value="C:cytosol"/>
    <property type="evidence" value="ECO:0000314"/>
    <property type="project" value="AgBase"/>
</dbReference>
<dbReference type="GO" id="GO:0043005">
    <property type="term" value="C:neuron projection"/>
    <property type="evidence" value="ECO:0000314"/>
    <property type="project" value="AgBase"/>
</dbReference>
<dbReference type="GO" id="GO:0005634">
    <property type="term" value="C:nucleus"/>
    <property type="evidence" value="ECO:0000318"/>
    <property type="project" value="GO_Central"/>
</dbReference>
<dbReference type="GO" id="GO:0005504">
    <property type="term" value="F:fatty acid binding"/>
    <property type="evidence" value="ECO:0000318"/>
    <property type="project" value="GO_Central"/>
</dbReference>
<dbReference type="GO" id="GO:0016918">
    <property type="term" value="F:retinal binding"/>
    <property type="evidence" value="ECO:0007669"/>
    <property type="project" value="UniProtKB-KW"/>
</dbReference>
<dbReference type="GO" id="GO:0001972">
    <property type="term" value="F:retinoic acid binding"/>
    <property type="evidence" value="ECO:0000314"/>
    <property type="project" value="AgBase"/>
</dbReference>
<dbReference type="GO" id="GO:0005501">
    <property type="term" value="F:retinoid binding"/>
    <property type="evidence" value="ECO:0000314"/>
    <property type="project" value="WormBase"/>
</dbReference>
<dbReference type="GO" id="GO:0019841">
    <property type="term" value="F:retinol binding"/>
    <property type="evidence" value="ECO:0007669"/>
    <property type="project" value="UniProtKB-KW"/>
</dbReference>
<dbReference type="GO" id="GO:0015908">
    <property type="term" value="P:fatty acid transport"/>
    <property type="evidence" value="ECO:0000318"/>
    <property type="project" value="GO_Central"/>
</dbReference>
<dbReference type="CDD" id="cd19460">
    <property type="entry name" value="CRABP1"/>
    <property type="match status" value="1"/>
</dbReference>
<dbReference type="FunFam" id="2.40.128.20:FF:000001">
    <property type="entry name" value="Fatty acid-binding protein, adipocyte"/>
    <property type="match status" value="1"/>
</dbReference>
<dbReference type="Gene3D" id="2.40.128.20">
    <property type="match status" value="1"/>
</dbReference>
<dbReference type="InterPro" id="IPR012674">
    <property type="entry name" value="Calycin"/>
</dbReference>
<dbReference type="InterPro" id="IPR000463">
    <property type="entry name" value="Fatty_acid-bd"/>
</dbReference>
<dbReference type="InterPro" id="IPR031259">
    <property type="entry name" value="ILBP"/>
</dbReference>
<dbReference type="InterPro" id="IPR000566">
    <property type="entry name" value="Lipocln_cytosolic_FA-bd_dom"/>
</dbReference>
<dbReference type="PANTHER" id="PTHR11955">
    <property type="entry name" value="FATTY ACID BINDING PROTEIN"/>
    <property type="match status" value="1"/>
</dbReference>
<dbReference type="Pfam" id="PF00061">
    <property type="entry name" value="Lipocalin"/>
    <property type="match status" value="1"/>
</dbReference>
<dbReference type="PRINTS" id="PR00178">
    <property type="entry name" value="FATTYACIDBP"/>
</dbReference>
<dbReference type="SUPFAM" id="SSF50814">
    <property type="entry name" value="Lipocalins"/>
    <property type="match status" value="1"/>
</dbReference>
<dbReference type="PROSITE" id="PS00214">
    <property type="entry name" value="FABP"/>
    <property type="match status" value="1"/>
</dbReference>
<comment type="function">
    <text>Cytosolic CRABPs may regulate the access of retinoic acid to the nuclear retinoic acid receptors.</text>
</comment>
<comment type="subcellular location">
    <subcellularLocation>
        <location>Cytoplasm</location>
    </subcellularLocation>
</comment>
<comment type="domain">
    <text evidence="1">Forms a beta-barrel structure that accommodates hydrophobic ligands in its interior.</text>
</comment>
<comment type="similarity">
    <text evidence="2">Belongs to the calycin superfamily. Fatty-acid binding protein (FABP) family.</text>
</comment>
<accession>P40220</accession>
<accession>O42405</accession>
<accession>Q5R2I9</accession>
<protein>
    <recommendedName>
        <fullName>Cellular retinoic acid-binding protein 1</fullName>
    </recommendedName>
    <alternativeName>
        <fullName>Cellular retinoic acid-binding protein I</fullName>
        <shortName>CRABP-I</shortName>
    </alternativeName>
</protein>
<gene>
    <name type="primary">CRABP1</name>
</gene>
<sequence length="137" mass="15663">MPNFAGTWKMRSSENFDELLKALGVNAMLRKVAVAAASKPHVEIRQDGDQFYIKTSTTVRTTEINFKIGESFEEETVDGRKCRSLATWENENKIYCKQTLIEGDGPKTYWTRELANDELILTFGADDVVCTRIYVRE</sequence>
<evidence type="ECO:0000250" key="1"/>
<evidence type="ECO:0000305" key="2"/>
<reference key="1">
    <citation type="journal article" date="2005" name="Evol. Dev.">
        <title>Comprehensive survey of carapacial ridge-specific genes in turtle implies co-option of some regulatory genes in carapace evolution.</title>
        <authorList>
            <person name="Kuraku S."/>
            <person name="Usuda R."/>
            <person name="Kuratani S."/>
        </authorList>
    </citation>
    <scope>NUCLEOTIDE SEQUENCE [MRNA]</scope>
</reference>
<reference key="2">
    <citation type="journal article" date="1998" name="Transgenic Res.">
        <title>Cloning and sequencing of the CRABP-I locus from chicken and pufferfish: analysis of the promoter regions in transgenic mice.</title>
        <authorList>
            <person name="Kleinjan D.A."/>
            <person name="Dekker S."/>
            <person name="Guy J.A."/>
            <person name="Grosveld F.G."/>
        </authorList>
    </citation>
    <scope>NUCLEOTIDE SEQUENCE [GENOMIC DNA] OF 1-121</scope>
</reference>
<reference key="3">
    <citation type="journal article" date="1990" name="Development">
        <title>The cellular retinoic-acid-binding protein is expressed in tissues associated with retinoic-acid-induced malformations.</title>
        <authorList>
            <person name="Vaessen M.-J."/>
            <person name="Meijers J.H.C."/>
            <person name="Bootsma D."/>
            <person name="Geurts van Kessel A."/>
        </authorList>
    </citation>
    <scope>NUCLEOTIDE SEQUENCE [MRNA] OF 10-113</scope>
</reference>
<reference key="4">
    <citation type="submission" date="2002-10" db="EMBL/GenBank/DDBJ databases">
        <authorList>
            <person name="Vaessen M.-J."/>
        </authorList>
    </citation>
    <scope>SEQUENCE REVISION</scope>
</reference>
<proteinExistence type="evidence at transcript level"/>
<organism>
    <name type="scientific">Gallus gallus</name>
    <name type="common">Chicken</name>
    <dbReference type="NCBI Taxonomy" id="9031"/>
    <lineage>
        <taxon>Eukaryota</taxon>
        <taxon>Metazoa</taxon>
        <taxon>Chordata</taxon>
        <taxon>Craniata</taxon>
        <taxon>Vertebrata</taxon>
        <taxon>Euteleostomi</taxon>
        <taxon>Archelosauria</taxon>
        <taxon>Archosauria</taxon>
        <taxon>Dinosauria</taxon>
        <taxon>Saurischia</taxon>
        <taxon>Theropoda</taxon>
        <taxon>Coelurosauria</taxon>
        <taxon>Aves</taxon>
        <taxon>Neognathae</taxon>
        <taxon>Galloanserae</taxon>
        <taxon>Galliformes</taxon>
        <taxon>Phasianidae</taxon>
        <taxon>Phasianinae</taxon>
        <taxon>Gallus</taxon>
    </lineage>
</organism>
<name>RABP1_CHICK</name>
<keyword id="KW-0963">Cytoplasm</keyword>
<keyword id="KW-1185">Reference proteome</keyword>
<keyword id="KW-0683">Retinol-binding</keyword>
<keyword id="KW-0813">Transport</keyword>
<keyword id="KW-0845">Vitamin A</keyword>